<name>LFTR_FLAPJ</name>
<organism>
    <name type="scientific">Flavobacterium psychrophilum (strain ATCC 49511 / DSM 21280 / CIP 103535 / JIP02/86)</name>
    <dbReference type="NCBI Taxonomy" id="402612"/>
    <lineage>
        <taxon>Bacteria</taxon>
        <taxon>Pseudomonadati</taxon>
        <taxon>Bacteroidota</taxon>
        <taxon>Flavobacteriia</taxon>
        <taxon>Flavobacteriales</taxon>
        <taxon>Flavobacteriaceae</taxon>
        <taxon>Flavobacterium</taxon>
    </lineage>
</organism>
<keyword id="KW-0012">Acyltransferase</keyword>
<keyword id="KW-0963">Cytoplasm</keyword>
<keyword id="KW-1185">Reference proteome</keyword>
<keyword id="KW-0808">Transferase</keyword>
<evidence type="ECO:0000255" key="1">
    <source>
        <dbReference type="HAMAP-Rule" id="MF_00688"/>
    </source>
</evidence>
<dbReference type="EC" id="2.3.2.6" evidence="1"/>
<dbReference type="EMBL" id="AM398681">
    <property type="protein sequence ID" value="CAL44407.1"/>
    <property type="molecule type" value="Genomic_DNA"/>
</dbReference>
<dbReference type="RefSeq" id="WP_011964441.1">
    <property type="nucleotide sequence ID" value="NC_009613.3"/>
</dbReference>
<dbReference type="RefSeq" id="YP_001297208.1">
    <property type="nucleotide sequence ID" value="NC_009613.3"/>
</dbReference>
<dbReference type="SMR" id="A6H233"/>
<dbReference type="STRING" id="402612.FP2352"/>
<dbReference type="EnsemblBacteria" id="CAL44407">
    <property type="protein sequence ID" value="CAL44407"/>
    <property type="gene ID" value="FP2352"/>
</dbReference>
<dbReference type="GeneID" id="66553460"/>
<dbReference type="KEGG" id="fps:FP2352"/>
<dbReference type="PATRIC" id="fig|402612.5.peg.2408"/>
<dbReference type="eggNOG" id="COG2360">
    <property type="taxonomic scope" value="Bacteria"/>
</dbReference>
<dbReference type="HOGENOM" id="CLU_075045_0_0_10"/>
<dbReference type="OrthoDB" id="9790282at2"/>
<dbReference type="Proteomes" id="UP000006394">
    <property type="component" value="Chromosome"/>
</dbReference>
<dbReference type="GO" id="GO:0005737">
    <property type="term" value="C:cytoplasm"/>
    <property type="evidence" value="ECO:0007669"/>
    <property type="project" value="UniProtKB-SubCell"/>
</dbReference>
<dbReference type="GO" id="GO:0008914">
    <property type="term" value="F:leucyl-tRNA--protein transferase activity"/>
    <property type="evidence" value="ECO:0007669"/>
    <property type="project" value="UniProtKB-UniRule"/>
</dbReference>
<dbReference type="GO" id="GO:0030163">
    <property type="term" value="P:protein catabolic process"/>
    <property type="evidence" value="ECO:0007669"/>
    <property type="project" value="UniProtKB-UniRule"/>
</dbReference>
<dbReference type="FunFam" id="3.30.70.3550:FF:000001">
    <property type="entry name" value="Leucyl/phenylalanyl-tRNA--protein transferase"/>
    <property type="match status" value="1"/>
</dbReference>
<dbReference type="Gene3D" id="3.40.630.70">
    <property type="entry name" value="Leucyl/phenylalanyl-tRNA-protein transferase, C-terminal domain"/>
    <property type="match status" value="1"/>
</dbReference>
<dbReference type="Gene3D" id="3.30.70.3550">
    <property type="entry name" value="Leucyl/phenylalanyl-tRNA-protein transferase, N-terminal domain"/>
    <property type="match status" value="1"/>
</dbReference>
<dbReference type="HAMAP" id="MF_00688">
    <property type="entry name" value="Leu_Phe_trans"/>
    <property type="match status" value="1"/>
</dbReference>
<dbReference type="InterPro" id="IPR016181">
    <property type="entry name" value="Acyl_CoA_acyltransferase"/>
</dbReference>
<dbReference type="InterPro" id="IPR004616">
    <property type="entry name" value="Leu/Phe-tRNA_Trfase"/>
</dbReference>
<dbReference type="InterPro" id="IPR042203">
    <property type="entry name" value="Leu/Phe-tRNA_Trfase_C"/>
</dbReference>
<dbReference type="InterPro" id="IPR042221">
    <property type="entry name" value="Leu/Phe-tRNA_Trfase_N"/>
</dbReference>
<dbReference type="NCBIfam" id="TIGR00667">
    <property type="entry name" value="aat"/>
    <property type="match status" value="1"/>
</dbReference>
<dbReference type="PANTHER" id="PTHR30098">
    <property type="entry name" value="LEUCYL/PHENYLALANYL-TRNA--PROTEIN TRANSFERASE"/>
    <property type="match status" value="1"/>
</dbReference>
<dbReference type="PANTHER" id="PTHR30098:SF2">
    <property type="entry name" value="LEUCYL_PHENYLALANYL-TRNA--PROTEIN TRANSFERASE"/>
    <property type="match status" value="1"/>
</dbReference>
<dbReference type="Pfam" id="PF03588">
    <property type="entry name" value="Leu_Phe_trans"/>
    <property type="match status" value="1"/>
</dbReference>
<dbReference type="SUPFAM" id="SSF55729">
    <property type="entry name" value="Acyl-CoA N-acyltransferases (Nat)"/>
    <property type="match status" value="1"/>
</dbReference>
<reference key="1">
    <citation type="journal article" date="2007" name="Nat. Biotechnol.">
        <title>Complete genome sequence of the fish pathogen Flavobacterium psychrophilum.</title>
        <authorList>
            <person name="Duchaud E."/>
            <person name="Boussaha M."/>
            <person name="Loux V."/>
            <person name="Bernardet J.-F."/>
            <person name="Michel C."/>
            <person name="Kerouault B."/>
            <person name="Mondot S."/>
            <person name="Nicolas P."/>
            <person name="Bossy R."/>
            <person name="Caron C."/>
            <person name="Bessieres P."/>
            <person name="Gibrat J.-F."/>
            <person name="Claverol S."/>
            <person name="Dumetz F."/>
            <person name="Le Henaff M."/>
            <person name="Benmansour A."/>
        </authorList>
    </citation>
    <scope>NUCLEOTIDE SEQUENCE [LARGE SCALE GENOMIC DNA]</scope>
    <source>
        <strain>ATCC 49511 / DSM 21280 / CIP 103535 / JIP02/86</strain>
    </source>
</reference>
<sequence>MHFLTQELSFPNTNESTRDGLLAIGGDLSTQRLLLAYENGIFPWFEEGEPIMWWSPRQRMVLFFDALVVSHSMRNVINKNIFKVTFNKAFREVIQNCQSVKREGQHGTWITNEMIESYCKLHELGKAISVEIWQNDTLVGGLYGVDMFPVFCGESMFSKVSNASKMAFISLADYLKTNHYNLLDCQIYNDHLNSLGCREIPRDEFLKFLKK</sequence>
<comment type="function">
    <text evidence="1">Functions in the N-end rule pathway of protein degradation where it conjugates Leu, Phe and, less efficiently, Met from aminoacyl-tRNAs to the N-termini of proteins containing an N-terminal arginine or lysine.</text>
</comment>
<comment type="catalytic activity">
    <reaction evidence="1">
        <text>N-terminal L-lysyl-[protein] + L-leucyl-tRNA(Leu) = N-terminal L-leucyl-L-lysyl-[protein] + tRNA(Leu) + H(+)</text>
        <dbReference type="Rhea" id="RHEA:12340"/>
        <dbReference type="Rhea" id="RHEA-COMP:9613"/>
        <dbReference type="Rhea" id="RHEA-COMP:9622"/>
        <dbReference type="Rhea" id="RHEA-COMP:12670"/>
        <dbReference type="Rhea" id="RHEA-COMP:12671"/>
        <dbReference type="ChEBI" id="CHEBI:15378"/>
        <dbReference type="ChEBI" id="CHEBI:65249"/>
        <dbReference type="ChEBI" id="CHEBI:78442"/>
        <dbReference type="ChEBI" id="CHEBI:78494"/>
        <dbReference type="ChEBI" id="CHEBI:133043"/>
        <dbReference type="EC" id="2.3.2.6"/>
    </reaction>
</comment>
<comment type="catalytic activity">
    <reaction evidence="1">
        <text>N-terminal L-arginyl-[protein] + L-leucyl-tRNA(Leu) = N-terminal L-leucyl-L-arginyl-[protein] + tRNA(Leu) + H(+)</text>
        <dbReference type="Rhea" id="RHEA:50416"/>
        <dbReference type="Rhea" id="RHEA-COMP:9613"/>
        <dbReference type="Rhea" id="RHEA-COMP:9622"/>
        <dbReference type="Rhea" id="RHEA-COMP:12672"/>
        <dbReference type="Rhea" id="RHEA-COMP:12673"/>
        <dbReference type="ChEBI" id="CHEBI:15378"/>
        <dbReference type="ChEBI" id="CHEBI:64719"/>
        <dbReference type="ChEBI" id="CHEBI:78442"/>
        <dbReference type="ChEBI" id="CHEBI:78494"/>
        <dbReference type="ChEBI" id="CHEBI:133044"/>
        <dbReference type="EC" id="2.3.2.6"/>
    </reaction>
</comment>
<comment type="catalytic activity">
    <reaction evidence="1">
        <text>L-phenylalanyl-tRNA(Phe) + an N-terminal L-alpha-aminoacyl-[protein] = an N-terminal L-phenylalanyl-L-alpha-aminoacyl-[protein] + tRNA(Phe)</text>
        <dbReference type="Rhea" id="RHEA:43632"/>
        <dbReference type="Rhea" id="RHEA-COMP:9668"/>
        <dbReference type="Rhea" id="RHEA-COMP:9699"/>
        <dbReference type="Rhea" id="RHEA-COMP:10636"/>
        <dbReference type="Rhea" id="RHEA-COMP:10637"/>
        <dbReference type="ChEBI" id="CHEBI:78442"/>
        <dbReference type="ChEBI" id="CHEBI:78531"/>
        <dbReference type="ChEBI" id="CHEBI:78597"/>
        <dbReference type="ChEBI" id="CHEBI:83561"/>
        <dbReference type="EC" id="2.3.2.6"/>
    </reaction>
</comment>
<comment type="subcellular location">
    <subcellularLocation>
        <location evidence="1">Cytoplasm</location>
    </subcellularLocation>
</comment>
<comment type="similarity">
    <text evidence="1">Belongs to the L/F-transferase family.</text>
</comment>
<gene>
    <name evidence="1" type="primary">aat</name>
    <name type="ordered locus">FP2352</name>
</gene>
<accession>A6H233</accession>
<proteinExistence type="inferred from homology"/>
<protein>
    <recommendedName>
        <fullName evidence="1">Leucyl/phenylalanyl-tRNA--protein transferase</fullName>
        <ecNumber evidence="1">2.3.2.6</ecNumber>
    </recommendedName>
    <alternativeName>
        <fullName evidence="1">L/F-transferase</fullName>
    </alternativeName>
    <alternativeName>
        <fullName evidence="1">Leucyltransferase</fullName>
    </alternativeName>
    <alternativeName>
        <fullName evidence="1">Phenyalanyltransferase</fullName>
    </alternativeName>
</protein>
<feature type="chain" id="PRO_1000062007" description="Leucyl/phenylalanyl-tRNA--protein transferase">
    <location>
        <begin position="1"/>
        <end position="211"/>
    </location>
</feature>